<keyword id="KW-0030">Aminoacyl-tRNA synthetase</keyword>
<keyword id="KW-0067">ATP-binding</keyword>
<keyword id="KW-0963">Cytoplasm</keyword>
<keyword id="KW-0436">Ligase</keyword>
<keyword id="KW-0547">Nucleotide-binding</keyword>
<keyword id="KW-0648">Protein biosynthesis</keyword>
<accession>A6LTP1</accession>
<dbReference type="EC" id="6.1.1.12" evidence="1"/>
<dbReference type="EMBL" id="CP000721">
    <property type="protein sequence ID" value="ABR33721.1"/>
    <property type="molecule type" value="Genomic_DNA"/>
</dbReference>
<dbReference type="RefSeq" id="WP_011968873.1">
    <property type="nucleotide sequence ID" value="NC_009617.1"/>
</dbReference>
<dbReference type="SMR" id="A6LTP1"/>
<dbReference type="KEGG" id="cbe:Cbei_1545"/>
<dbReference type="eggNOG" id="COG0173">
    <property type="taxonomic scope" value="Bacteria"/>
</dbReference>
<dbReference type="HOGENOM" id="CLU_014330_3_2_9"/>
<dbReference type="Proteomes" id="UP000000565">
    <property type="component" value="Chromosome"/>
</dbReference>
<dbReference type="GO" id="GO:0005737">
    <property type="term" value="C:cytoplasm"/>
    <property type="evidence" value="ECO:0007669"/>
    <property type="project" value="UniProtKB-SubCell"/>
</dbReference>
<dbReference type="GO" id="GO:0004815">
    <property type="term" value="F:aspartate-tRNA ligase activity"/>
    <property type="evidence" value="ECO:0007669"/>
    <property type="project" value="UniProtKB-UniRule"/>
</dbReference>
<dbReference type="GO" id="GO:0005524">
    <property type="term" value="F:ATP binding"/>
    <property type="evidence" value="ECO:0007669"/>
    <property type="project" value="UniProtKB-UniRule"/>
</dbReference>
<dbReference type="GO" id="GO:0140096">
    <property type="term" value="F:catalytic activity, acting on a protein"/>
    <property type="evidence" value="ECO:0007669"/>
    <property type="project" value="UniProtKB-ARBA"/>
</dbReference>
<dbReference type="GO" id="GO:0003676">
    <property type="term" value="F:nucleic acid binding"/>
    <property type="evidence" value="ECO:0007669"/>
    <property type="project" value="InterPro"/>
</dbReference>
<dbReference type="GO" id="GO:0016740">
    <property type="term" value="F:transferase activity"/>
    <property type="evidence" value="ECO:0007669"/>
    <property type="project" value="UniProtKB-ARBA"/>
</dbReference>
<dbReference type="GO" id="GO:0006422">
    <property type="term" value="P:aspartyl-tRNA aminoacylation"/>
    <property type="evidence" value="ECO:0007669"/>
    <property type="project" value="UniProtKB-UniRule"/>
</dbReference>
<dbReference type="CDD" id="cd00777">
    <property type="entry name" value="AspRS_core"/>
    <property type="match status" value="1"/>
</dbReference>
<dbReference type="CDD" id="cd04317">
    <property type="entry name" value="EcAspRS_like_N"/>
    <property type="match status" value="1"/>
</dbReference>
<dbReference type="Gene3D" id="3.30.930.10">
    <property type="entry name" value="Bira Bifunctional Protein, Domain 2"/>
    <property type="match status" value="1"/>
</dbReference>
<dbReference type="Gene3D" id="3.30.1360.30">
    <property type="entry name" value="GAD-like domain"/>
    <property type="match status" value="1"/>
</dbReference>
<dbReference type="Gene3D" id="2.40.50.140">
    <property type="entry name" value="Nucleic acid-binding proteins"/>
    <property type="match status" value="1"/>
</dbReference>
<dbReference type="HAMAP" id="MF_00044">
    <property type="entry name" value="Asp_tRNA_synth_type1"/>
    <property type="match status" value="1"/>
</dbReference>
<dbReference type="InterPro" id="IPR004364">
    <property type="entry name" value="Aa-tRNA-synt_II"/>
</dbReference>
<dbReference type="InterPro" id="IPR006195">
    <property type="entry name" value="aa-tRNA-synth_II"/>
</dbReference>
<dbReference type="InterPro" id="IPR045864">
    <property type="entry name" value="aa-tRNA-synth_II/BPL/LPL"/>
</dbReference>
<dbReference type="InterPro" id="IPR004524">
    <property type="entry name" value="Asp-tRNA-ligase_1"/>
</dbReference>
<dbReference type="InterPro" id="IPR047089">
    <property type="entry name" value="Asp-tRNA-ligase_1_N"/>
</dbReference>
<dbReference type="InterPro" id="IPR002312">
    <property type="entry name" value="Asp/Asn-tRNA-synth_IIb"/>
</dbReference>
<dbReference type="InterPro" id="IPR047090">
    <property type="entry name" value="AspRS_core"/>
</dbReference>
<dbReference type="InterPro" id="IPR004115">
    <property type="entry name" value="GAD-like_sf"/>
</dbReference>
<dbReference type="InterPro" id="IPR029351">
    <property type="entry name" value="GAD_dom"/>
</dbReference>
<dbReference type="InterPro" id="IPR012340">
    <property type="entry name" value="NA-bd_OB-fold"/>
</dbReference>
<dbReference type="InterPro" id="IPR004365">
    <property type="entry name" value="NA-bd_OB_tRNA"/>
</dbReference>
<dbReference type="NCBIfam" id="TIGR00459">
    <property type="entry name" value="aspS_bact"/>
    <property type="match status" value="1"/>
</dbReference>
<dbReference type="NCBIfam" id="NF001750">
    <property type="entry name" value="PRK00476.1"/>
    <property type="match status" value="1"/>
</dbReference>
<dbReference type="PANTHER" id="PTHR22594:SF5">
    <property type="entry name" value="ASPARTATE--TRNA LIGASE, MITOCHONDRIAL"/>
    <property type="match status" value="1"/>
</dbReference>
<dbReference type="PANTHER" id="PTHR22594">
    <property type="entry name" value="ASPARTYL/LYSYL-TRNA SYNTHETASE"/>
    <property type="match status" value="1"/>
</dbReference>
<dbReference type="Pfam" id="PF02938">
    <property type="entry name" value="GAD"/>
    <property type="match status" value="1"/>
</dbReference>
<dbReference type="Pfam" id="PF00152">
    <property type="entry name" value="tRNA-synt_2"/>
    <property type="match status" value="1"/>
</dbReference>
<dbReference type="Pfam" id="PF01336">
    <property type="entry name" value="tRNA_anti-codon"/>
    <property type="match status" value="1"/>
</dbReference>
<dbReference type="PRINTS" id="PR01042">
    <property type="entry name" value="TRNASYNTHASP"/>
</dbReference>
<dbReference type="SUPFAM" id="SSF55681">
    <property type="entry name" value="Class II aaRS and biotin synthetases"/>
    <property type="match status" value="1"/>
</dbReference>
<dbReference type="SUPFAM" id="SSF55261">
    <property type="entry name" value="GAD domain-like"/>
    <property type="match status" value="1"/>
</dbReference>
<dbReference type="SUPFAM" id="SSF50249">
    <property type="entry name" value="Nucleic acid-binding proteins"/>
    <property type="match status" value="1"/>
</dbReference>
<dbReference type="PROSITE" id="PS50862">
    <property type="entry name" value="AA_TRNA_LIGASE_II"/>
    <property type="match status" value="1"/>
</dbReference>
<sequence>MGESLNGLKRTMMCGEPREEHVGKKITLMGWVQRNRKLGALEFVDLRDKTGIMQVVFGEEINAEAFEKAKGVRSEYCVAVTGEVVKRESVNENMPTGFVELKCENIKILSESETPPIYIKEDLDAAENIRLKYRYLDLRRSDMHKIFEIRSKTTKAIRDYLEENNFLDVETPILSKSSPEGARDYLVPSRNYPGMFYALPQSPQIFKQLLMVSGFDRYYQIAKCFRDEDLRANRQPEFTQVDMELSFVEQEDIMAVNEGLIAHVFKKVAGVDVQLPIKRMTFKDAMEKYGSDKPDLRFGMEITNITEDVKDLDFVVFKSAIEAGGSVRALCLKCGADLGRKPLDKLGEFVKTYKAKGLAWIQIKEDGVKSSIAKFLTDDVTNSIVKTMNAETGDAILIVADKNSVVFQSLGALRLELAKQFDLIKDKNEFNFTWITEFPLFEYSEEEERYKACHHPFTAPMDEDLDFIESDPGNVRSKAYDLVLNGEELGGGSIRIHDTALQERMFRALGLTDEVVNERFGYLLQAFKFGPPPHGGLAFGLDRMIMFLAGTENIKDVIAFPKNQNAYCYLSEAPNIVDEKQLTELGIAILPKEEKNDKE</sequence>
<name>SYD_CLOB8</name>
<comment type="function">
    <text evidence="1">Catalyzes the attachment of L-aspartate to tRNA(Asp) in a two-step reaction: L-aspartate is first activated by ATP to form Asp-AMP and then transferred to the acceptor end of tRNA(Asp).</text>
</comment>
<comment type="catalytic activity">
    <reaction evidence="1">
        <text>tRNA(Asp) + L-aspartate + ATP = L-aspartyl-tRNA(Asp) + AMP + diphosphate</text>
        <dbReference type="Rhea" id="RHEA:19649"/>
        <dbReference type="Rhea" id="RHEA-COMP:9660"/>
        <dbReference type="Rhea" id="RHEA-COMP:9678"/>
        <dbReference type="ChEBI" id="CHEBI:29991"/>
        <dbReference type="ChEBI" id="CHEBI:30616"/>
        <dbReference type="ChEBI" id="CHEBI:33019"/>
        <dbReference type="ChEBI" id="CHEBI:78442"/>
        <dbReference type="ChEBI" id="CHEBI:78516"/>
        <dbReference type="ChEBI" id="CHEBI:456215"/>
        <dbReference type="EC" id="6.1.1.12"/>
    </reaction>
</comment>
<comment type="subunit">
    <text evidence="1">Homodimer.</text>
</comment>
<comment type="subcellular location">
    <subcellularLocation>
        <location evidence="1">Cytoplasm</location>
    </subcellularLocation>
</comment>
<comment type="similarity">
    <text evidence="1">Belongs to the class-II aminoacyl-tRNA synthetase family. Type 1 subfamily.</text>
</comment>
<protein>
    <recommendedName>
        <fullName evidence="1">Aspartate--tRNA ligase</fullName>
        <ecNumber evidence="1">6.1.1.12</ecNumber>
    </recommendedName>
    <alternativeName>
        <fullName evidence="1">Aspartyl-tRNA synthetase</fullName>
        <shortName evidence="1">AspRS</shortName>
    </alternativeName>
</protein>
<evidence type="ECO:0000255" key="1">
    <source>
        <dbReference type="HAMAP-Rule" id="MF_00044"/>
    </source>
</evidence>
<organism>
    <name type="scientific">Clostridium beijerinckii (strain ATCC 51743 / NCIMB 8052)</name>
    <name type="common">Clostridium acetobutylicum</name>
    <dbReference type="NCBI Taxonomy" id="290402"/>
    <lineage>
        <taxon>Bacteria</taxon>
        <taxon>Bacillati</taxon>
        <taxon>Bacillota</taxon>
        <taxon>Clostridia</taxon>
        <taxon>Eubacteriales</taxon>
        <taxon>Clostridiaceae</taxon>
        <taxon>Clostridium</taxon>
    </lineage>
</organism>
<reference key="1">
    <citation type="submission" date="2007-06" db="EMBL/GenBank/DDBJ databases">
        <title>Complete sequence of Clostridium beijerinckii NCIMB 8052.</title>
        <authorList>
            <consortium name="US DOE Joint Genome Institute"/>
            <person name="Copeland A."/>
            <person name="Lucas S."/>
            <person name="Lapidus A."/>
            <person name="Barry K."/>
            <person name="Detter J.C."/>
            <person name="Glavina del Rio T."/>
            <person name="Hammon N."/>
            <person name="Israni S."/>
            <person name="Dalin E."/>
            <person name="Tice H."/>
            <person name="Pitluck S."/>
            <person name="Sims D."/>
            <person name="Brettin T."/>
            <person name="Bruce D."/>
            <person name="Tapia R."/>
            <person name="Brainard J."/>
            <person name="Schmutz J."/>
            <person name="Larimer F."/>
            <person name="Land M."/>
            <person name="Hauser L."/>
            <person name="Kyrpides N."/>
            <person name="Mikhailova N."/>
            <person name="Bennet G."/>
            <person name="Cann I."/>
            <person name="Chen J.-S."/>
            <person name="Contreras A.L."/>
            <person name="Jones D."/>
            <person name="Kashket E."/>
            <person name="Mitchell W."/>
            <person name="Stoddard S."/>
            <person name="Schwarz W."/>
            <person name="Qureshi N."/>
            <person name="Young M."/>
            <person name="Shi Z."/>
            <person name="Ezeji T."/>
            <person name="White B."/>
            <person name="Blaschek H."/>
            <person name="Richardson P."/>
        </authorList>
    </citation>
    <scope>NUCLEOTIDE SEQUENCE [LARGE SCALE GENOMIC DNA]</scope>
    <source>
        <strain>ATCC 51743 / NCIMB 8052</strain>
    </source>
</reference>
<gene>
    <name evidence="1" type="primary">aspS</name>
    <name type="ordered locus">Cbei_1545</name>
</gene>
<feature type="chain" id="PRO_1000074695" description="Aspartate--tRNA ligase">
    <location>
        <begin position="1"/>
        <end position="599"/>
    </location>
</feature>
<feature type="region of interest" description="Aspartate" evidence="1">
    <location>
        <begin position="204"/>
        <end position="207"/>
    </location>
</feature>
<feature type="binding site" evidence="1">
    <location>
        <position position="180"/>
    </location>
    <ligand>
        <name>L-aspartate</name>
        <dbReference type="ChEBI" id="CHEBI:29991"/>
    </ligand>
</feature>
<feature type="binding site" evidence="1">
    <location>
        <begin position="226"/>
        <end position="228"/>
    </location>
    <ligand>
        <name>ATP</name>
        <dbReference type="ChEBI" id="CHEBI:30616"/>
    </ligand>
</feature>
<feature type="binding site" evidence="1">
    <location>
        <position position="226"/>
    </location>
    <ligand>
        <name>L-aspartate</name>
        <dbReference type="ChEBI" id="CHEBI:29991"/>
    </ligand>
</feature>
<feature type="binding site" evidence="1">
    <location>
        <position position="235"/>
    </location>
    <ligand>
        <name>ATP</name>
        <dbReference type="ChEBI" id="CHEBI:30616"/>
    </ligand>
</feature>
<feature type="binding site" evidence="1">
    <location>
        <position position="454"/>
    </location>
    <ligand>
        <name>L-aspartate</name>
        <dbReference type="ChEBI" id="CHEBI:29991"/>
    </ligand>
</feature>
<feature type="binding site" evidence="1">
    <location>
        <position position="488"/>
    </location>
    <ligand>
        <name>ATP</name>
        <dbReference type="ChEBI" id="CHEBI:30616"/>
    </ligand>
</feature>
<feature type="binding site" evidence="1">
    <location>
        <position position="495"/>
    </location>
    <ligand>
        <name>L-aspartate</name>
        <dbReference type="ChEBI" id="CHEBI:29991"/>
    </ligand>
</feature>
<feature type="binding site" evidence="1">
    <location>
        <begin position="540"/>
        <end position="543"/>
    </location>
    <ligand>
        <name>ATP</name>
        <dbReference type="ChEBI" id="CHEBI:30616"/>
    </ligand>
</feature>
<proteinExistence type="inferred from homology"/>